<sequence length="87" mass="9838">MSSTFEQAAADVKELKETPNSDELLKLYALFKQATVGDNNTEKPGLLDLKGKFKWNAWEELKGKSKEDAASEYISFVDELKTKYGMK</sequence>
<evidence type="ECO:0000250" key="1"/>
<evidence type="ECO:0000250" key="2">
    <source>
        <dbReference type="UniProtKB" id="P31787"/>
    </source>
</evidence>
<evidence type="ECO:0000255" key="3">
    <source>
        <dbReference type="PROSITE-ProRule" id="PRU00573"/>
    </source>
</evidence>
<evidence type="ECO:0000269" key="4">
    <source>
    </source>
</evidence>
<evidence type="ECO:0000305" key="5"/>
<protein>
    <recommendedName>
        <fullName>Putative acyl-CoA-binding protein</fullName>
        <shortName>ACBP</shortName>
    </recommendedName>
</protein>
<proteinExistence type="inferred from homology"/>
<organism>
    <name type="scientific">Schizosaccharomyces pombe (strain 972 / ATCC 24843)</name>
    <name type="common">Fission yeast</name>
    <dbReference type="NCBI Taxonomy" id="284812"/>
    <lineage>
        <taxon>Eukaryota</taxon>
        <taxon>Fungi</taxon>
        <taxon>Dikarya</taxon>
        <taxon>Ascomycota</taxon>
        <taxon>Taphrinomycotina</taxon>
        <taxon>Schizosaccharomycetes</taxon>
        <taxon>Schizosaccharomycetales</taxon>
        <taxon>Schizosaccharomycetaceae</taxon>
        <taxon>Schizosaccharomyces</taxon>
    </lineage>
</organism>
<feature type="chain" id="PRO_0000316197" description="Putative acyl-CoA-binding protein">
    <location>
        <begin position="1"/>
        <end position="87"/>
    </location>
</feature>
<feature type="domain" description="ACB" evidence="3">
    <location>
        <begin position="1"/>
        <end position="86"/>
    </location>
</feature>
<feature type="binding site" evidence="1">
    <location>
        <position position="13"/>
    </location>
    <ligand>
        <name>an acyl-CoA</name>
        <dbReference type="ChEBI" id="CHEBI:58342"/>
    </ligand>
</feature>
<feature type="binding site" evidence="1">
    <location>
        <begin position="28"/>
        <end position="32"/>
    </location>
    <ligand>
        <name>an acyl-CoA</name>
        <dbReference type="ChEBI" id="CHEBI:58342"/>
    </ligand>
</feature>
<feature type="binding site" evidence="1">
    <location>
        <position position="50"/>
    </location>
    <ligand>
        <name>an acyl-CoA</name>
        <dbReference type="ChEBI" id="CHEBI:58342"/>
    </ligand>
</feature>
<feature type="binding site" evidence="1">
    <location>
        <position position="54"/>
    </location>
    <ligand>
        <name>an acyl-CoA</name>
        <dbReference type="ChEBI" id="CHEBI:58342"/>
    </ligand>
</feature>
<feature type="binding site" evidence="1">
    <location>
        <position position="73"/>
    </location>
    <ligand>
        <name>an acyl-CoA</name>
        <dbReference type="ChEBI" id="CHEBI:58342"/>
    </ligand>
</feature>
<keyword id="KW-0963">Cytoplasm</keyword>
<keyword id="KW-0446">Lipid-binding</keyword>
<keyword id="KW-0539">Nucleus</keyword>
<keyword id="KW-1185">Reference proteome</keyword>
<keyword id="KW-0813">Transport</keyword>
<accession>Q9Y7Z3</accession>
<reference key="1">
    <citation type="journal article" date="2002" name="Nature">
        <title>The genome sequence of Schizosaccharomyces pombe.</title>
        <authorList>
            <person name="Wood V."/>
            <person name="Gwilliam R."/>
            <person name="Rajandream M.A."/>
            <person name="Lyne M.H."/>
            <person name="Lyne R."/>
            <person name="Stewart A."/>
            <person name="Sgouros J.G."/>
            <person name="Peat N."/>
            <person name="Hayles J."/>
            <person name="Baker S.G."/>
            <person name="Basham D."/>
            <person name="Bowman S."/>
            <person name="Brooks K."/>
            <person name="Brown D."/>
            <person name="Brown S."/>
            <person name="Chillingworth T."/>
            <person name="Churcher C.M."/>
            <person name="Collins M."/>
            <person name="Connor R."/>
            <person name="Cronin A."/>
            <person name="Davis P."/>
            <person name="Feltwell T."/>
            <person name="Fraser A."/>
            <person name="Gentles S."/>
            <person name="Goble A."/>
            <person name="Hamlin N."/>
            <person name="Harris D.E."/>
            <person name="Hidalgo J."/>
            <person name="Hodgson G."/>
            <person name="Holroyd S."/>
            <person name="Hornsby T."/>
            <person name="Howarth S."/>
            <person name="Huckle E.J."/>
            <person name="Hunt S."/>
            <person name="Jagels K."/>
            <person name="James K.D."/>
            <person name="Jones L."/>
            <person name="Jones M."/>
            <person name="Leather S."/>
            <person name="McDonald S."/>
            <person name="McLean J."/>
            <person name="Mooney P."/>
            <person name="Moule S."/>
            <person name="Mungall K.L."/>
            <person name="Murphy L.D."/>
            <person name="Niblett D."/>
            <person name="Odell C."/>
            <person name="Oliver K."/>
            <person name="O'Neil S."/>
            <person name="Pearson D."/>
            <person name="Quail M.A."/>
            <person name="Rabbinowitsch E."/>
            <person name="Rutherford K.M."/>
            <person name="Rutter S."/>
            <person name="Saunders D."/>
            <person name="Seeger K."/>
            <person name="Sharp S."/>
            <person name="Skelton J."/>
            <person name="Simmonds M.N."/>
            <person name="Squares R."/>
            <person name="Squares S."/>
            <person name="Stevens K."/>
            <person name="Taylor K."/>
            <person name="Taylor R.G."/>
            <person name="Tivey A."/>
            <person name="Walsh S.V."/>
            <person name="Warren T."/>
            <person name="Whitehead S."/>
            <person name="Woodward J.R."/>
            <person name="Volckaert G."/>
            <person name="Aert R."/>
            <person name="Robben J."/>
            <person name="Grymonprez B."/>
            <person name="Weltjens I."/>
            <person name="Vanstreels E."/>
            <person name="Rieger M."/>
            <person name="Schaefer M."/>
            <person name="Mueller-Auer S."/>
            <person name="Gabel C."/>
            <person name="Fuchs M."/>
            <person name="Duesterhoeft A."/>
            <person name="Fritzc C."/>
            <person name="Holzer E."/>
            <person name="Moestl D."/>
            <person name="Hilbert H."/>
            <person name="Borzym K."/>
            <person name="Langer I."/>
            <person name="Beck A."/>
            <person name="Lehrach H."/>
            <person name="Reinhardt R."/>
            <person name="Pohl T.M."/>
            <person name="Eger P."/>
            <person name="Zimmermann W."/>
            <person name="Wedler H."/>
            <person name="Wambutt R."/>
            <person name="Purnelle B."/>
            <person name="Goffeau A."/>
            <person name="Cadieu E."/>
            <person name="Dreano S."/>
            <person name="Gloux S."/>
            <person name="Lelaure V."/>
            <person name="Mottier S."/>
            <person name="Galibert F."/>
            <person name="Aves S.J."/>
            <person name="Xiang Z."/>
            <person name="Hunt C."/>
            <person name="Moore K."/>
            <person name="Hurst S.M."/>
            <person name="Lucas M."/>
            <person name="Rochet M."/>
            <person name="Gaillardin C."/>
            <person name="Tallada V.A."/>
            <person name="Garzon A."/>
            <person name="Thode G."/>
            <person name="Daga R.R."/>
            <person name="Cruzado L."/>
            <person name="Jimenez J."/>
            <person name="Sanchez M."/>
            <person name="del Rey F."/>
            <person name="Benito J."/>
            <person name="Dominguez A."/>
            <person name="Revuelta J.L."/>
            <person name="Moreno S."/>
            <person name="Armstrong J."/>
            <person name="Forsburg S.L."/>
            <person name="Cerutti L."/>
            <person name="Lowe T."/>
            <person name="McCombie W.R."/>
            <person name="Paulsen I."/>
            <person name="Potashkin J."/>
            <person name="Shpakovski G.V."/>
            <person name="Ussery D."/>
            <person name="Barrell B.G."/>
            <person name="Nurse P."/>
        </authorList>
    </citation>
    <scope>NUCLEOTIDE SEQUENCE [LARGE SCALE GENOMIC DNA]</scope>
    <source>
        <strain>972 / ATCC 24843</strain>
    </source>
</reference>
<reference key="2">
    <citation type="journal article" date="2006" name="Nat. Biotechnol.">
        <title>ORFeome cloning and global analysis of protein localization in the fission yeast Schizosaccharomyces pombe.</title>
        <authorList>
            <person name="Matsuyama A."/>
            <person name="Arai R."/>
            <person name="Yashiroda Y."/>
            <person name="Shirai A."/>
            <person name="Kamata A."/>
            <person name="Sekido S."/>
            <person name="Kobayashi Y."/>
            <person name="Hashimoto A."/>
            <person name="Hamamoto M."/>
            <person name="Hiraoka Y."/>
            <person name="Horinouchi S."/>
            <person name="Yoshida M."/>
        </authorList>
    </citation>
    <scope>SUBCELLULAR LOCATION [LARGE SCALE ANALYSIS]</scope>
</reference>
<name>ACBP_SCHPO</name>
<comment type="function">
    <text evidence="1 2">Binds medium- and long-chain acyl-CoA esters with very high affinity and may function as an intracellular carrier of acyl-CoA esters. May enhance the activity of the ceramide synthase complex (By similarity).</text>
</comment>
<comment type="subcellular location">
    <subcellularLocation>
        <location evidence="4">Cytoplasm</location>
    </subcellularLocation>
    <subcellularLocation>
        <location evidence="4">Nucleus</location>
    </subcellularLocation>
</comment>
<comment type="similarity">
    <text evidence="5">Belongs to the ACBP family.</text>
</comment>
<gene>
    <name type="ORF">SPBC1539.06</name>
</gene>
<dbReference type="EMBL" id="CU329671">
    <property type="protein sequence ID" value="CAB51338.1"/>
    <property type="molecule type" value="Genomic_DNA"/>
</dbReference>
<dbReference type="PIR" id="T39465">
    <property type="entry name" value="T39465"/>
</dbReference>
<dbReference type="SMR" id="Q9Y7Z3"/>
<dbReference type="BioGRID" id="276526">
    <property type="interactions" value="2"/>
</dbReference>
<dbReference type="FunCoup" id="Q9Y7Z3">
    <property type="interactions" value="146"/>
</dbReference>
<dbReference type="STRING" id="284812.Q9Y7Z3"/>
<dbReference type="iPTMnet" id="Q9Y7Z3"/>
<dbReference type="PaxDb" id="4896-SPBC1539.06.1"/>
<dbReference type="EnsemblFungi" id="SPBC1539.06.1">
    <property type="protein sequence ID" value="SPBC1539.06.1:pep"/>
    <property type="gene ID" value="SPBC1539.06"/>
</dbReference>
<dbReference type="KEGG" id="spo:2539982"/>
<dbReference type="PomBase" id="SPBC1539.06"/>
<dbReference type="VEuPathDB" id="FungiDB:SPBC1539.06"/>
<dbReference type="eggNOG" id="KOG0817">
    <property type="taxonomic scope" value="Eukaryota"/>
</dbReference>
<dbReference type="HOGENOM" id="CLU_118853_4_1_1"/>
<dbReference type="InParanoid" id="Q9Y7Z3"/>
<dbReference type="OMA" id="RYKFEAW"/>
<dbReference type="PhylomeDB" id="Q9Y7Z3"/>
<dbReference type="Reactome" id="R-SPO-77289">
    <property type="pathway name" value="Mitochondrial Fatty Acid Beta-Oxidation"/>
</dbReference>
<dbReference type="PRO" id="PR:Q9Y7Z3"/>
<dbReference type="Proteomes" id="UP000002485">
    <property type="component" value="Chromosome II"/>
</dbReference>
<dbReference type="GO" id="GO:0005829">
    <property type="term" value="C:cytosol"/>
    <property type="evidence" value="ECO:0007005"/>
    <property type="project" value="PomBase"/>
</dbReference>
<dbReference type="GO" id="GO:0005634">
    <property type="term" value="C:nucleus"/>
    <property type="evidence" value="ECO:0000314"/>
    <property type="project" value="PomBase"/>
</dbReference>
<dbReference type="GO" id="GO:0036042">
    <property type="term" value="F:long-chain fatty acyl-CoA binding"/>
    <property type="evidence" value="ECO:0000318"/>
    <property type="project" value="GO_Central"/>
</dbReference>
<dbReference type="GO" id="GO:0006631">
    <property type="term" value="P:fatty acid metabolic process"/>
    <property type="evidence" value="ECO:0000318"/>
    <property type="project" value="GO_Central"/>
</dbReference>
<dbReference type="GO" id="GO:0042761">
    <property type="term" value="P:very long-chain fatty acid biosynthetic process"/>
    <property type="evidence" value="ECO:0000266"/>
    <property type="project" value="PomBase"/>
</dbReference>
<dbReference type="FunFam" id="1.20.80.10:FF:000010">
    <property type="entry name" value="Acyl-CoA-binding domain-containing protein 5"/>
    <property type="match status" value="1"/>
</dbReference>
<dbReference type="Gene3D" id="1.20.80.10">
    <property type="match status" value="1"/>
</dbReference>
<dbReference type="InterPro" id="IPR000582">
    <property type="entry name" value="Acyl-CoA-binding_protein"/>
</dbReference>
<dbReference type="InterPro" id="IPR035984">
    <property type="entry name" value="Acyl-CoA-binding_sf"/>
</dbReference>
<dbReference type="InterPro" id="IPR014352">
    <property type="entry name" value="FERM/acyl-CoA-bd_prot_sf"/>
</dbReference>
<dbReference type="PANTHER" id="PTHR23310:SF62">
    <property type="entry name" value="ACYL-COA BINDING PROTEIN 1, ISOFORM A"/>
    <property type="match status" value="1"/>
</dbReference>
<dbReference type="PANTHER" id="PTHR23310">
    <property type="entry name" value="ACYL-COA-BINDING PROTEIN, ACBP"/>
    <property type="match status" value="1"/>
</dbReference>
<dbReference type="Pfam" id="PF00887">
    <property type="entry name" value="ACBP"/>
    <property type="match status" value="1"/>
</dbReference>
<dbReference type="PRINTS" id="PR00689">
    <property type="entry name" value="ACOABINDINGP"/>
</dbReference>
<dbReference type="SUPFAM" id="SSF47027">
    <property type="entry name" value="Acyl-CoA binding protein"/>
    <property type="match status" value="1"/>
</dbReference>
<dbReference type="PROSITE" id="PS51228">
    <property type="entry name" value="ACB_2"/>
    <property type="match status" value="1"/>
</dbReference>